<accession>P41847</accession>
<keyword id="KW-0001">2Fe-2S</keyword>
<keyword id="KW-0004">4Fe-4S</keyword>
<keyword id="KW-0963">Cytoplasm</keyword>
<keyword id="KW-0408">Iron</keyword>
<keyword id="KW-0411">Iron-sulfur</keyword>
<keyword id="KW-0479">Metal-binding</keyword>
<keyword id="KW-0496">Mitochondrion</keyword>
<keyword id="KW-1185">Reference proteome</keyword>
<feature type="chain" id="PRO_0000065475" description="Anamorsin homolog">
    <location>
        <begin position="1"/>
        <end position="238"/>
    </location>
</feature>
<feature type="region of interest" description="N-terminal SAM-like domain" evidence="1">
    <location>
        <begin position="1"/>
        <end position="121"/>
    </location>
</feature>
<feature type="region of interest" description="Linker" evidence="1">
    <location>
        <begin position="121"/>
        <end position="150"/>
    </location>
</feature>
<feature type="region of interest" description="Fe-S binding site A" evidence="1">
    <location>
        <begin position="163"/>
        <end position="180"/>
    </location>
</feature>
<feature type="region of interest" description="Fe-S binding site B" evidence="1">
    <location>
        <begin position="202"/>
        <end position="216"/>
    </location>
</feature>
<feature type="short sequence motif" description="Cx2C motif 1" evidence="1">
    <location>
        <begin position="202"/>
        <end position="205"/>
    </location>
</feature>
<feature type="short sequence motif" description="Cx2C motif 2" evidence="1">
    <location>
        <begin position="213"/>
        <end position="216"/>
    </location>
</feature>
<feature type="binding site" evidence="1">
    <location>
        <position position="163"/>
    </location>
    <ligand>
        <name>[2Fe-2S] cluster</name>
        <dbReference type="ChEBI" id="CHEBI:190135"/>
    </ligand>
</feature>
<feature type="binding site" evidence="1">
    <location>
        <position position="175"/>
    </location>
    <ligand>
        <name>[2Fe-2S] cluster</name>
        <dbReference type="ChEBI" id="CHEBI:190135"/>
    </ligand>
</feature>
<feature type="binding site" evidence="1">
    <location>
        <position position="178"/>
    </location>
    <ligand>
        <name>[2Fe-2S] cluster</name>
        <dbReference type="ChEBI" id="CHEBI:190135"/>
    </ligand>
</feature>
<feature type="binding site" evidence="1">
    <location>
        <position position="180"/>
    </location>
    <ligand>
        <name>[2Fe-2S] cluster</name>
        <dbReference type="ChEBI" id="CHEBI:190135"/>
    </ligand>
</feature>
<feature type="binding site" evidence="1">
    <location>
        <position position="202"/>
    </location>
    <ligand>
        <name>[4Fe-4S] cluster</name>
        <dbReference type="ChEBI" id="CHEBI:49883"/>
    </ligand>
</feature>
<feature type="binding site" evidence="1">
    <location>
        <position position="205"/>
    </location>
    <ligand>
        <name>[4Fe-4S] cluster</name>
        <dbReference type="ChEBI" id="CHEBI:49883"/>
    </ligand>
</feature>
<feature type="binding site" evidence="1">
    <location>
        <position position="213"/>
    </location>
    <ligand>
        <name>[4Fe-4S] cluster</name>
        <dbReference type="ChEBI" id="CHEBI:49883"/>
    </ligand>
</feature>
<feature type="binding site" evidence="1">
    <location>
        <position position="216"/>
    </location>
    <ligand>
        <name>[4Fe-4S] cluster</name>
        <dbReference type="ChEBI" id="CHEBI:49883"/>
    </ligand>
</feature>
<gene>
    <name type="ORF">T20B12.7</name>
</gene>
<reference key="1">
    <citation type="journal article" date="1998" name="Science">
        <title>Genome sequence of the nematode C. elegans: a platform for investigating biology.</title>
        <authorList>
            <consortium name="The C. elegans sequencing consortium"/>
        </authorList>
    </citation>
    <scope>NUCLEOTIDE SEQUENCE [LARGE SCALE GENOMIC DNA]</scope>
    <source>
        <strain>Bristol N2</strain>
    </source>
</reference>
<organism>
    <name type="scientific">Caenorhabditis elegans</name>
    <dbReference type="NCBI Taxonomy" id="6239"/>
    <lineage>
        <taxon>Eukaryota</taxon>
        <taxon>Metazoa</taxon>
        <taxon>Ecdysozoa</taxon>
        <taxon>Nematoda</taxon>
        <taxon>Chromadorea</taxon>
        <taxon>Rhabditida</taxon>
        <taxon>Rhabditina</taxon>
        <taxon>Rhabditomorpha</taxon>
        <taxon>Rhabditoidea</taxon>
        <taxon>Rhabditidae</taxon>
        <taxon>Peloderinae</taxon>
        <taxon>Caenorhabditis</taxon>
    </lineage>
</organism>
<comment type="function">
    <text evidence="1">Component of the cytosolic iron-sulfur (Fe-S) protein assembly (CIA) machinery. Required for the maturation of extramitochondrial Fe-S proteins. Part of an electron transfer chain functioning in an early step of cytosolic Fe-S biogenesis, facilitating the de novo assembly of a [4Fe-4S] cluster on the cytosolic Fe-S scaffold complex. Electrons are transferred from NADPH via a FAD- and FMN-containing diflavin oxidoreductase. Together with the diflavin oxidoreductase, also required for the assembly of the diferric tyrosyl radical cofactor of ribonucleotide reductase (RNR), probably by providing electrons for reduction during radical cofactor maturation in the catalytic small subunit.</text>
</comment>
<comment type="cofactor">
    <cofactor evidence="1">
        <name>[2Fe-2S] cluster</name>
        <dbReference type="ChEBI" id="CHEBI:190135"/>
    </cofactor>
</comment>
<comment type="cofactor">
    <cofactor evidence="1">
        <name>[4Fe-4S] cluster</name>
        <dbReference type="ChEBI" id="CHEBI:49883"/>
    </cofactor>
</comment>
<comment type="subunit">
    <text evidence="1">Monomer.</text>
</comment>
<comment type="subcellular location">
    <subcellularLocation>
        <location evidence="1">Cytoplasm</location>
    </subcellularLocation>
    <subcellularLocation>
        <location evidence="1">Mitochondrion intermembrane space</location>
    </subcellularLocation>
</comment>
<comment type="domain">
    <text evidence="1">The C-terminal domain binds 2 Fe-S clusters but is otherwise mostly in an intrinsically disordered conformation.</text>
</comment>
<comment type="domain">
    <text evidence="1">The N-terminal domain has structural similarity with S-adenosyl-L-methionine-dependent methyltransferases, but does not bind S-adenosyl-L-methionine. It is required for correct assembly of the 2 Fe-S clusters.</text>
</comment>
<comment type="domain">
    <text evidence="1">The twin Cx2C motifs are involved in the recognition by the mitochondrial MIA40-ERV1 disulfide relay system. The formation of 2 disulfide bonds in the Cx2C motifs through dithiol/disulfide exchange reactions effectively traps the protein in the mitochondrial intermembrane space.</text>
</comment>
<comment type="similarity">
    <text evidence="1">Belongs to the anamorsin family.</text>
</comment>
<dbReference type="EMBL" id="FO081094">
    <property type="protein sequence ID" value="CCD69077.1"/>
    <property type="molecule type" value="Genomic_DNA"/>
</dbReference>
<dbReference type="PIR" id="T16907">
    <property type="entry name" value="T16907"/>
</dbReference>
<dbReference type="RefSeq" id="NP_498632.1">
    <property type="nucleotide sequence ID" value="NM_066231.5"/>
</dbReference>
<dbReference type="BioGRID" id="41260">
    <property type="interactions" value="9"/>
</dbReference>
<dbReference type="DIP" id="DIP-25608N"/>
<dbReference type="FunCoup" id="P41847">
    <property type="interactions" value="335"/>
</dbReference>
<dbReference type="IntAct" id="P41847">
    <property type="interactions" value="1"/>
</dbReference>
<dbReference type="STRING" id="6239.T20B12.7.1"/>
<dbReference type="PaxDb" id="6239-T20B12.7"/>
<dbReference type="PeptideAtlas" id="P41847"/>
<dbReference type="EnsemblMetazoa" id="T20B12.7.1">
    <property type="protein sequence ID" value="T20B12.7.1"/>
    <property type="gene ID" value="WBGene00020604"/>
</dbReference>
<dbReference type="GeneID" id="176051"/>
<dbReference type="KEGG" id="cel:CELE_T20B12.7"/>
<dbReference type="UCSC" id="T20B12.7.1">
    <property type="organism name" value="c. elegans"/>
</dbReference>
<dbReference type="AGR" id="WB:WBGene00020604"/>
<dbReference type="CTD" id="176051"/>
<dbReference type="WormBase" id="T20B12.7">
    <property type="protein sequence ID" value="CE01413"/>
    <property type="gene ID" value="WBGene00020604"/>
</dbReference>
<dbReference type="eggNOG" id="KOG4020">
    <property type="taxonomic scope" value="Eukaryota"/>
</dbReference>
<dbReference type="GeneTree" id="ENSGT00390000011417"/>
<dbReference type="HOGENOM" id="CLU_064393_3_0_1"/>
<dbReference type="InParanoid" id="P41847"/>
<dbReference type="OMA" id="CGPDDPN"/>
<dbReference type="OrthoDB" id="311633at2759"/>
<dbReference type="PhylomeDB" id="P41847"/>
<dbReference type="PRO" id="PR:P41847"/>
<dbReference type="Proteomes" id="UP000001940">
    <property type="component" value="Chromosome III"/>
</dbReference>
<dbReference type="Bgee" id="WBGene00020604">
    <property type="expression patterns" value="Expressed in embryo and 4 other cell types or tissues"/>
</dbReference>
<dbReference type="GO" id="GO:0005737">
    <property type="term" value="C:cytoplasm"/>
    <property type="evidence" value="ECO:0000318"/>
    <property type="project" value="GO_Central"/>
</dbReference>
<dbReference type="GO" id="GO:0005758">
    <property type="term" value="C:mitochondrial intermembrane space"/>
    <property type="evidence" value="ECO:0007669"/>
    <property type="project" value="UniProtKB-SubCell"/>
</dbReference>
<dbReference type="GO" id="GO:0051537">
    <property type="term" value="F:2 iron, 2 sulfur cluster binding"/>
    <property type="evidence" value="ECO:0007669"/>
    <property type="project" value="UniProtKB-UniRule"/>
</dbReference>
<dbReference type="GO" id="GO:0051539">
    <property type="term" value="F:4 iron, 4 sulfur cluster binding"/>
    <property type="evidence" value="ECO:0007669"/>
    <property type="project" value="UniProtKB-KW"/>
</dbReference>
<dbReference type="GO" id="GO:0009055">
    <property type="term" value="F:electron transfer activity"/>
    <property type="evidence" value="ECO:0007669"/>
    <property type="project" value="UniProtKB-UniRule"/>
</dbReference>
<dbReference type="GO" id="GO:0046872">
    <property type="term" value="F:metal ion binding"/>
    <property type="evidence" value="ECO:0007669"/>
    <property type="project" value="UniProtKB-KW"/>
</dbReference>
<dbReference type="GO" id="GO:0016226">
    <property type="term" value="P:iron-sulfur cluster assembly"/>
    <property type="evidence" value="ECO:0000318"/>
    <property type="project" value="GO_Central"/>
</dbReference>
<dbReference type="HAMAP" id="MF_03115">
    <property type="entry name" value="Anamorsin"/>
    <property type="match status" value="1"/>
</dbReference>
<dbReference type="InterPro" id="IPR007785">
    <property type="entry name" value="Anamorsin"/>
</dbReference>
<dbReference type="InterPro" id="IPR046408">
    <property type="entry name" value="CIAPIN1"/>
</dbReference>
<dbReference type="PANTHER" id="PTHR13273">
    <property type="entry name" value="ANAMORSIN"/>
    <property type="match status" value="1"/>
</dbReference>
<dbReference type="PANTHER" id="PTHR13273:SF14">
    <property type="entry name" value="ANAMORSIN"/>
    <property type="match status" value="1"/>
</dbReference>
<dbReference type="Pfam" id="PF05093">
    <property type="entry name" value="CIAPIN1"/>
    <property type="match status" value="2"/>
</dbReference>
<proteinExistence type="inferred from homology"/>
<sequence length="238" mass="25551">MSILSDFLKHPNLLQVTDGGPLVDGTNGVKGTRVVGSVSNARELRGADSLVGDVERAIIQVQETELLAEVCNTVFDVMKQNGEVIVFSQDLTTAQRKLRIAGFRVTEVAAEFPVRGIKLVNFGEKVALDLGVVADEDLIDEDGLLQEEDFEKPTGDQLKAGGCGPDDPNKKKRACKNCSCGLAEQEELEKMGQIAAEPKSSCGNCSLGDAFRCSTCPYLGQPPFKPGETVKISTVDDF</sequence>
<protein>
    <recommendedName>
        <fullName evidence="1">Anamorsin homolog</fullName>
    </recommendedName>
    <alternativeName>
        <fullName evidence="1">Fe-S cluster assembly protein DRE2 homolog</fullName>
    </alternativeName>
</protein>
<evidence type="ECO:0000255" key="1">
    <source>
        <dbReference type="HAMAP-Rule" id="MF_03115"/>
    </source>
</evidence>
<name>DRE2_CAEEL</name>